<sequence length="277" mass="30175">MALIKVKPTSPGRRSVVKVVTPELHKGKPYAPLLEKQSKKAGRNNNGHITTRHQGGGHKQHYRIVDFRRNKDGIPAKVERLEYDPNRSAHLALLVYADGERRYIIAPRGVSVGAQLVSGSDAPIRAGNALPLRNIPVGSTIHCIELQPGKGAQVARSAGTSVQLLAREGSYAQLRLRSGEVRRVHVDCKATIGEVGNEEHSLRSIGKAGAVRWRGVRPTVRGVVMNPVDHPHGGGEGKTAAGMNPVSPWGLPTKGYRTRSNKRTDNMRVSRRPANKR</sequence>
<dbReference type="EMBL" id="CP000284">
    <property type="protein sequence ID" value="ABE48553.1"/>
    <property type="molecule type" value="Genomic_DNA"/>
</dbReference>
<dbReference type="RefSeq" id="WP_011478650.1">
    <property type="nucleotide sequence ID" value="NC_007947.1"/>
</dbReference>
<dbReference type="SMR" id="Q1H4N4"/>
<dbReference type="STRING" id="265072.Mfla_0282"/>
<dbReference type="KEGG" id="mfa:Mfla_0282"/>
<dbReference type="eggNOG" id="COG0090">
    <property type="taxonomic scope" value="Bacteria"/>
</dbReference>
<dbReference type="HOGENOM" id="CLU_036235_2_1_4"/>
<dbReference type="OrthoDB" id="9778722at2"/>
<dbReference type="Proteomes" id="UP000002440">
    <property type="component" value="Chromosome"/>
</dbReference>
<dbReference type="GO" id="GO:0015934">
    <property type="term" value="C:large ribosomal subunit"/>
    <property type="evidence" value="ECO:0007669"/>
    <property type="project" value="InterPro"/>
</dbReference>
<dbReference type="GO" id="GO:0019843">
    <property type="term" value="F:rRNA binding"/>
    <property type="evidence" value="ECO:0007669"/>
    <property type="project" value="UniProtKB-UniRule"/>
</dbReference>
<dbReference type="GO" id="GO:0003735">
    <property type="term" value="F:structural constituent of ribosome"/>
    <property type="evidence" value="ECO:0007669"/>
    <property type="project" value="InterPro"/>
</dbReference>
<dbReference type="GO" id="GO:0016740">
    <property type="term" value="F:transferase activity"/>
    <property type="evidence" value="ECO:0007669"/>
    <property type="project" value="InterPro"/>
</dbReference>
<dbReference type="GO" id="GO:0002181">
    <property type="term" value="P:cytoplasmic translation"/>
    <property type="evidence" value="ECO:0007669"/>
    <property type="project" value="TreeGrafter"/>
</dbReference>
<dbReference type="FunFam" id="2.30.30.30:FF:000001">
    <property type="entry name" value="50S ribosomal protein L2"/>
    <property type="match status" value="1"/>
</dbReference>
<dbReference type="FunFam" id="2.40.50.140:FF:000003">
    <property type="entry name" value="50S ribosomal protein L2"/>
    <property type="match status" value="1"/>
</dbReference>
<dbReference type="FunFam" id="4.10.950.10:FF:000001">
    <property type="entry name" value="50S ribosomal protein L2"/>
    <property type="match status" value="1"/>
</dbReference>
<dbReference type="Gene3D" id="2.30.30.30">
    <property type="match status" value="1"/>
</dbReference>
<dbReference type="Gene3D" id="2.40.50.140">
    <property type="entry name" value="Nucleic acid-binding proteins"/>
    <property type="match status" value="1"/>
</dbReference>
<dbReference type="Gene3D" id="4.10.950.10">
    <property type="entry name" value="Ribosomal protein L2, domain 3"/>
    <property type="match status" value="1"/>
</dbReference>
<dbReference type="HAMAP" id="MF_01320_B">
    <property type="entry name" value="Ribosomal_uL2_B"/>
    <property type="match status" value="1"/>
</dbReference>
<dbReference type="InterPro" id="IPR012340">
    <property type="entry name" value="NA-bd_OB-fold"/>
</dbReference>
<dbReference type="InterPro" id="IPR014722">
    <property type="entry name" value="Rib_uL2_dom2"/>
</dbReference>
<dbReference type="InterPro" id="IPR002171">
    <property type="entry name" value="Ribosomal_uL2"/>
</dbReference>
<dbReference type="InterPro" id="IPR005880">
    <property type="entry name" value="Ribosomal_uL2_bac/org-type"/>
</dbReference>
<dbReference type="InterPro" id="IPR022669">
    <property type="entry name" value="Ribosomal_uL2_C"/>
</dbReference>
<dbReference type="InterPro" id="IPR022671">
    <property type="entry name" value="Ribosomal_uL2_CS"/>
</dbReference>
<dbReference type="InterPro" id="IPR014726">
    <property type="entry name" value="Ribosomal_uL2_dom3"/>
</dbReference>
<dbReference type="InterPro" id="IPR022666">
    <property type="entry name" value="Ribosomal_uL2_RNA-bd_dom"/>
</dbReference>
<dbReference type="InterPro" id="IPR008991">
    <property type="entry name" value="Translation_prot_SH3-like_sf"/>
</dbReference>
<dbReference type="NCBIfam" id="TIGR01171">
    <property type="entry name" value="rplB_bact"/>
    <property type="match status" value="1"/>
</dbReference>
<dbReference type="PANTHER" id="PTHR13691:SF5">
    <property type="entry name" value="LARGE RIBOSOMAL SUBUNIT PROTEIN UL2M"/>
    <property type="match status" value="1"/>
</dbReference>
<dbReference type="PANTHER" id="PTHR13691">
    <property type="entry name" value="RIBOSOMAL PROTEIN L2"/>
    <property type="match status" value="1"/>
</dbReference>
<dbReference type="Pfam" id="PF00181">
    <property type="entry name" value="Ribosomal_L2"/>
    <property type="match status" value="1"/>
</dbReference>
<dbReference type="Pfam" id="PF03947">
    <property type="entry name" value="Ribosomal_L2_C"/>
    <property type="match status" value="1"/>
</dbReference>
<dbReference type="PIRSF" id="PIRSF002158">
    <property type="entry name" value="Ribosomal_L2"/>
    <property type="match status" value="1"/>
</dbReference>
<dbReference type="SMART" id="SM01383">
    <property type="entry name" value="Ribosomal_L2"/>
    <property type="match status" value="1"/>
</dbReference>
<dbReference type="SMART" id="SM01382">
    <property type="entry name" value="Ribosomal_L2_C"/>
    <property type="match status" value="1"/>
</dbReference>
<dbReference type="SUPFAM" id="SSF50249">
    <property type="entry name" value="Nucleic acid-binding proteins"/>
    <property type="match status" value="1"/>
</dbReference>
<dbReference type="SUPFAM" id="SSF50104">
    <property type="entry name" value="Translation proteins SH3-like domain"/>
    <property type="match status" value="1"/>
</dbReference>
<dbReference type="PROSITE" id="PS00467">
    <property type="entry name" value="RIBOSOMAL_L2"/>
    <property type="match status" value="1"/>
</dbReference>
<protein>
    <recommendedName>
        <fullName evidence="1">Large ribosomal subunit protein uL2</fullName>
    </recommendedName>
    <alternativeName>
        <fullName evidence="3">50S ribosomal protein L2</fullName>
    </alternativeName>
</protein>
<accession>Q1H4N4</accession>
<feature type="chain" id="PRO_0000309955" description="Large ribosomal subunit protein uL2">
    <location>
        <begin position="1"/>
        <end position="277"/>
    </location>
</feature>
<feature type="region of interest" description="Disordered" evidence="2">
    <location>
        <begin position="35"/>
        <end position="60"/>
    </location>
</feature>
<feature type="region of interest" description="Disordered" evidence="2">
    <location>
        <begin position="225"/>
        <end position="277"/>
    </location>
</feature>
<feature type="compositionally biased region" description="Polar residues" evidence="2">
    <location>
        <begin position="43"/>
        <end position="53"/>
    </location>
</feature>
<organism>
    <name type="scientific">Methylobacillus flagellatus (strain ATCC 51484 / DSM 6875 / VKM B-1610 / KT)</name>
    <dbReference type="NCBI Taxonomy" id="265072"/>
    <lineage>
        <taxon>Bacteria</taxon>
        <taxon>Pseudomonadati</taxon>
        <taxon>Pseudomonadota</taxon>
        <taxon>Betaproteobacteria</taxon>
        <taxon>Nitrosomonadales</taxon>
        <taxon>Methylophilaceae</taxon>
        <taxon>Methylobacillus</taxon>
    </lineage>
</organism>
<gene>
    <name evidence="1" type="primary">rplB</name>
    <name type="ordered locus">Mfla_0282</name>
</gene>
<comment type="function">
    <text evidence="1">One of the primary rRNA binding proteins. Required for association of the 30S and 50S subunits to form the 70S ribosome, for tRNA binding and peptide bond formation. It has been suggested to have peptidyltransferase activity; this is somewhat controversial. Makes several contacts with the 16S rRNA in the 70S ribosome.</text>
</comment>
<comment type="subunit">
    <text evidence="1">Part of the 50S ribosomal subunit. Forms a bridge to the 30S subunit in the 70S ribosome.</text>
</comment>
<comment type="similarity">
    <text evidence="1">Belongs to the universal ribosomal protein uL2 family.</text>
</comment>
<reference key="1">
    <citation type="submission" date="2006-03" db="EMBL/GenBank/DDBJ databases">
        <title>Complete sequence of Methylobacillus flagellatus KT.</title>
        <authorList>
            <consortium name="US DOE Joint Genome Institute"/>
            <person name="Copeland A."/>
            <person name="Lucas S."/>
            <person name="Lapidus A."/>
            <person name="Barry K."/>
            <person name="Detter J.C."/>
            <person name="Glavina del Rio T."/>
            <person name="Hammon N."/>
            <person name="Israni S."/>
            <person name="Dalin E."/>
            <person name="Tice H."/>
            <person name="Pitluck S."/>
            <person name="Brettin T."/>
            <person name="Bruce D."/>
            <person name="Han C."/>
            <person name="Tapia R."/>
            <person name="Saunders E."/>
            <person name="Gilna P."/>
            <person name="Schmutz J."/>
            <person name="Larimer F."/>
            <person name="Land M."/>
            <person name="Kyrpides N."/>
            <person name="Anderson I."/>
            <person name="Richardson P."/>
        </authorList>
    </citation>
    <scope>NUCLEOTIDE SEQUENCE [LARGE SCALE GENOMIC DNA]</scope>
    <source>
        <strain>ATCC 51484 / DSM 6875 / VKM B-1610 / KT</strain>
    </source>
</reference>
<evidence type="ECO:0000255" key="1">
    <source>
        <dbReference type="HAMAP-Rule" id="MF_01320"/>
    </source>
</evidence>
<evidence type="ECO:0000256" key="2">
    <source>
        <dbReference type="SAM" id="MobiDB-lite"/>
    </source>
</evidence>
<evidence type="ECO:0000305" key="3"/>
<proteinExistence type="inferred from homology"/>
<name>RL2_METFK</name>
<keyword id="KW-1185">Reference proteome</keyword>
<keyword id="KW-0687">Ribonucleoprotein</keyword>
<keyword id="KW-0689">Ribosomal protein</keyword>
<keyword id="KW-0694">RNA-binding</keyword>
<keyword id="KW-0699">rRNA-binding</keyword>